<sequence>MKTFKEFIKEDMVAGDSGGNPENISIGTTSGAVVNKGPEQIPKKKKEESKEKEE</sequence>
<evidence type="ECO:0000256" key="1">
    <source>
        <dbReference type="SAM" id="MobiDB-lite"/>
    </source>
</evidence>
<evidence type="ECO:0000305" key="2"/>
<keyword id="KW-1185">Reference proteome</keyword>
<gene>
    <name type="primary">y01K</name>
    <name type="synonym">61.1</name>
</gene>
<organism>
    <name type="scientific">Enterobacteria phage T4</name>
    <name type="common">Bacteriophage T4</name>
    <dbReference type="NCBI Taxonomy" id="10665"/>
    <lineage>
        <taxon>Viruses</taxon>
        <taxon>Duplodnaviria</taxon>
        <taxon>Heunggongvirae</taxon>
        <taxon>Uroviricota</taxon>
        <taxon>Caudoviricetes</taxon>
        <taxon>Straboviridae</taxon>
        <taxon>Tevenvirinae</taxon>
        <taxon>Tequatrovirus</taxon>
    </lineage>
</organism>
<protein>
    <recommendedName>
        <fullName>Uncharacterized 5.9 kDa protein in Gp58-sp intergenic region</fullName>
    </recommendedName>
</protein>
<reference key="1">
    <citation type="journal article" date="1993" name="J. Virol.">
        <title>Analysis of five presumptive protein-coding sequences clustered between the primosome genes, 41 and 61, of bacteriophages T4, T2, and T6.</title>
        <authorList>
            <person name="Selick H.E."/>
            <person name="Stormo G.D."/>
            <person name="Dyson R.L."/>
            <person name="Alberts B.M."/>
        </authorList>
    </citation>
    <scope>NUCLEOTIDE SEQUENCE [GENOMIC DNA]</scope>
</reference>
<reference key="2">
    <citation type="journal article" date="2003" name="Microbiol. Mol. Biol. Rev.">
        <title>Bacteriophage T4 genome.</title>
        <authorList>
            <person name="Miller E.S."/>
            <person name="Kutter E."/>
            <person name="Mosig G."/>
            <person name="Arisaka F."/>
            <person name="Kunisawa T."/>
            <person name="Ruger W."/>
        </authorList>
    </citation>
    <scope>NUCLEOTIDE SEQUENCE [LARGE SCALE GENOMIC DNA]</scope>
</reference>
<feature type="chain" id="PRO_0000165092" description="Uncharacterized 5.9 kDa protein in Gp58-sp intergenic region">
    <location>
        <begin position="1"/>
        <end position="54"/>
    </location>
</feature>
<feature type="region of interest" description="Disordered" evidence="1">
    <location>
        <begin position="13"/>
        <end position="54"/>
    </location>
</feature>
<feature type="compositionally biased region" description="Polar residues" evidence="1">
    <location>
        <begin position="20"/>
        <end position="32"/>
    </location>
</feature>
<feature type="compositionally biased region" description="Basic and acidic residues" evidence="1">
    <location>
        <begin position="41"/>
        <end position="54"/>
    </location>
</feature>
<feature type="sequence conflict" description="In Ref. 1; AAB25712." evidence="2" ref="1">
    <original>I</original>
    <variation>T</variation>
    <location>
        <position position="26"/>
    </location>
</feature>
<dbReference type="EMBL" id="S57514">
    <property type="protein sequence ID" value="AAB25712.1"/>
    <property type="molecule type" value="Genomic_DNA"/>
</dbReference>
<dbReference type="EMBL" id="AF158101">
    <property type="protein sequence ID" value="AAD42508.1"/>
    <property type="molecule type" value="Genomic_DNA"/>
</dbReference>
<dbReference type="PIR" id="E45681">
    <property type="entry name" value="E45681"/>
</dbReference>
<dbReference type="RefSeq" id="NP_049649.1">
    <property type="nucleotide sequence ID" value="NC_000866.4"/>
</dbReference>
<dbReference type="SMR" id="P39228"/>
<dbReference type="GeneID" id="1258567"/>
<dbReference type="KEGG" id="vg:1258567"/>
<dbReference type="OrthoDB" id="27220at10239"/>
<dbReference type="Proteomes" id="UP000009087">
    <property type="component" value="Segment"/>
</dbReference>
<organismHost>
    <name type="scientific">Escherichia coli</name>
    <dbReference type="NCBI Taxonomy" id="562"/>
</organismHost>
<proteinExistence type="predicted"/>
<name>Y01K_BPT4</name>
<accession>P39228</accession>
<accession>Q9T0V8</accession>